<evidence type="ECO:0000255" key="1">
    <source>
        <dbReference type="HAMAP-Rule" id="MF_00531"/>
    </source>
</evidence>
<evidence type="ECO:0000305" key="2"/>
<dbReference type="EMBL" id="CP000323">
    <property type="protein sequence ID" value="ABE74271.1"/>
    <property type="molecule type" value="Genomic_DNA"/>
</dbReference>
<dbReference type="RefSeq" id="WP_011279791.1">
    <property type="nucleotide sequence ID" value="NC_007969.1"/>
</dbReference>
<dbReference type="SMR" id="Q1QDI2"/>
<dbReference type="STRING" id="335284.Pcryo_0488"/>
<dbReference type="KEGG" id="pcr:Pcryo_0488"/>
<dbReference type="eggNOG" id="COG0185">
    <property type="taxonomic scope" value="Bacteria"/>
</dbReference>
<dbReference type="HOGENOM" id="CLU_144911_0_1_6"/>
<dbReference type="Proteomes" id="UP000002425">
    <property type="component" value="Chromosome"/>
</dbReference>
<dbReference type="GO" id="GO:0005737">
    <property type="term" value="C:cytoplasm"/>
    <property type="evidence" value="ECO:0007669"/>
    <property type="project" value="UniProtKB-ARBA"/>
</dbReference>
<dbReference type="GO" id="GO:0015935">
    <property type="term" value="C:small ribosomal subunit"/>
    <property type="evidence" value="ECO:0007669"/>
    <property type="project" value="InterPro"/>
</dbReference>
<dbReference type="GO" id="GO:0019843">
    <property type="term" value="F:rRNA binding"/>
    <property type="evidence" value="ECO:0007669"/>
    <property type="project" value="UniProtKB-UniRule"/>
</dbReference>
<dbReference type="GO" id="GO:0003735">
    <property type="term" value="F:structural constituent of ribosome"/>
    <property type="evidence" value="ECO:0007669"/>
    <property type="project" value="InterPro"/>
</dbReference>
<dbReference type="GO" id="GO:0000028">
    <property type="term" value="P:ribosomal small subunit assembly"/>
    <property type="evidence" value="ECO:0007669"/>
    <property type="project" value="TreeGrafter"/>
</dbReference>
<dbReference type="GO" id="GO:0006412">
    <property type="term" value="P:translation"/>
    <property type="evidence" value="ECO:0007669"/>
    <property type="project" value="UniProtKB-UniRule"/>
</dbReference>
<dbReference type="FunFam" id="3.30.860.10:FF:000001">
    <property type="entry name" value="30S ribosomal protein S19"/>
    <property type="match status" value="1"/>
</dbReference>
<dbReference type="Gene3D" id="3.30.860.10">
    <property type="entry name" value="30s Ribosomal Protein S19, Chain A"/>
    <property type="match status" value="1"/>
</dbReference>
<dbReference type="HAMAP" id="MF_00531">
    <property type="entry name" value="Ribosomal_uS19"/>
    <property type="match status" value="1"/>
</dbReference>
<dbReference type="InterPro" id="IPR002222">
    <property type="entry name" value="Ribosomal_uS19"/>
</dbReference>
<dbReference type="InterPro" id="IPR005732">
    <property type="entry name" value="Ribosomal_uS19_bac-type"/>
</dbReference>
<dbReference type="InterPro" id="IPR020934">
    <property type="entry name" value="Ribosomal_uS19_CS"/>
</dbReference>
<dbReference type="InterPro" id="IPR023575">
    <property type="entry name" value="Ribosomal_uS19_SF"/>
</dbReference>
<dbReference type="NCBIfam" id="TIGR01050">
    <property type="entry name" value="rpsS_bact"/>
    <property type="match status" value="1"/>
</dbReference>
<dbReference type="PANTHER" id="PTHR11880">
    <property type="entry name" value="RIBOSOMAL PROTEIN S19P FAMILY MEMBER"/>
    <property type="match status" value="1"/>
</dbReference>
<dbReference type="PANTHER" id="PTHR11880:SF8">
    <property type="entry name" value="SMALL RIBOSOMAL SUBUNIT PROTEIN US19M"/>
    <property type="match status" value="1"/>
</dbReference>
<dbReference type="Pfam" id="PF00203">
    <property type="entry name" value="Ribosomal_S19"/>
    <property type="match status" value="1"/>
</dbReference>
<dbReference type="PIRSF" id="PIRSF002144">
    <property type="entry name" value="Ribosomal_S19"/>
    <property type="match status" value="1"/>
</dbReference>
<dbReference type="PRINTS" id="PR00975">
    <property type="entry name" value="RIBOSOMALS19"/>
</dbReference>
<dbReference type="SUPFAM" id="SSF54570">
    <property type="entry name" value="Ribosomal protein S19"/>
    <property type="match status" value="1"/>
</dbReference>
<dbReference type="PROSITE" id="PS00323">
    <property type="entry name" value="RIBOSOMAL_S19"/>
    <property type="match status" value="1"/>
</dbReference>
<organism>
    <name type="scientific">Psychrobacter cryohalolentis (strain ATCC BAA-1226 / DSM 17306 / VKM B-2378 / K5)</name>
    <dbReference type="NCBI Taxonomy" id="335284"/>
    <lineage>
        <taxon>Bacteria</taxon>
        <taxon>Pseudomonadati</taxon>
        <taxon>Pseudomonadota</taxon>
        <taxon>Gammaproteobacteria</taxon>
        <taxon>Moraxellales</taxon>
        <taxon>Moraxellaceae</taxon>
        <taxon>Psychrobacter</taxon>
    </lineage>
</organism>
<name>RS19_PSYCK</name>
<protein>
    <recommendedName>
        <fullName evidence="1">Small ribosomal subunit protein uS19</fullName>
    </recommendedName>
    <alternativeName>
        <fullName evidence="2">30S ribosomal protein S19</fullName>
    </alternativeName>
</protein>
<sequence>MPRSLKKGPFIDAHLFAKVETALETNSRKPIKTWSRRSMILPQMVGLTLSVHNGRTHVPVIVSEQMVGHKLGEFAPTRTYRGHGIDKKAKR</sequence>
<feature type="chain" id="PRO_0000265407" description="Small ribosomal subunit protein uS19">
    <location>
        <begin position="1"/>
        <end position="91"/>
    </location>
</feature>
<accession>Q1QDI2</accession>
<proteinExistence type="inferred from homology"/>
<comment type="function">
    <text evidence="1">Protein S19 forms a complex with S13 that binds strongly to the 16S ribosomal RNA.</text>
</comment>
<comment type="similarity">
    <text evidence="1">Belongs to the universal ribosomal protein uS19 family.</text>
</comment>
<gene>
    <name evidence="1" type="primary">rpsS</name>
    <name type="ordered locus">Pcryo_0488</name>
</gene>
<reference key="1">
    <citation type="submission" date="2006-03" db="EMBL/GenBank/DDBJ databases">
        <title>Complete sequence of chromosome of Psychrobacter cryohalolentis K5.</title>
        <authorList>
            <consortium name="US DOE Joint Genome Institute"/>
            <person name="Copeland A."/>
            <person name="Lucas S."/>
            <person name="Lapidus A."/>
            <person name="Barry K."/>
            <person name="Detter J.C."/>
            <person name="Glavina T."/>
            <person name="Hammon N."/>
            <person name="Israni S."/>
            <person name="Dalin E."/>
            <person name="Tice H."/>
            <person name="Pitluck S."/>
            <person name="Brettin T."/>
            <person name="Bruce D."/>
            <person name="Han C."/>
            <person name="Tapia R."/>
            <person name="Sims D.R."/>
            <person name="Gilna P."/>
            <person name="Schmutz J."/>
            <person name="Larimer F."/>
            <person name="Land M."/>
            <person name="Hauser L."/>
            <person name="Kyrpides N."/>
            <person name="Kim E."/>
            <person name="Richardson P."/>
        </authorList>
    </citation>
    <scope>NUCLEOTIDE SEQUENCE [LARGE SCALE GENOMIC DNA]</scope>
    <source>
        <strain>ATCC BAA-1226 / DSM 17306 / VKM B-2378 / K5</strain>
    </source>
</reference>
<keyword id="KW-0687">Ribonucleoprotein</keyword>
<keyword id="KW-0689">Ribosomal protein</keyword>
<keyword id="KW-0694">RNA-binding</keyword>
<keyword id="KW-0699">rRNA-binding</keyword>